<evidence type="ECO:0000255" key="1">
    <source>
        <dbReference type="HAMAP-Rule" id="MF_01309"/>
    </source>
</evidence>
<evidence type="ECO:0000305" key="2"/>
<keyword id="KW-0687">Ribonucleoprotein</keyword>
<keyword id="KW-0689">Ribosomal protein</keyword>
<keyword id="KW-0694">RNA-binding</keyword>
<keyword id="KW-0699">rRNA-binding</keyword>
<comment type="function">
    <text evidence="1">Binds the lower part of the 30S subunit head. Binds mRNA in the 70S ribosome, positioning it for translation.</text>
</comment>
<comment type="subunit">
    <text evidence="1">Part of the 30S ribosomal subunit. Forms a tight complex with proteins S10 and S14.</text>
</comment>
<comment type="similarity">
    <text evidence="1">Belongs to the universal ribosomal protein uS3 family.</text>
</comment>
<dbReference type="EMBL" id="AP008232">
    <property type="protein sequence ID" value="BAE75547.1"/>
    <property type="molecule type" value="Genomic_DNA"/>
</dbReference>
<dbReference type="RefSeq" id="WP_011412082.1">
    <property type="nucleotide sequence ID" value="NC_007712.1"/>
</dbReference>
<dbReference type="SMR" id="Q2NQM8"/>
<dbReference type="STRING" id="343509.SG2272"/>
<dbReference type="KEGG" id="sgl:SG2272"/>
<dbReference type="eggNOG" id="COG0092">
    <property type="taxonomic scope" value="Bacteria"/>
</dbReference>
<dbReference type="HOGENOM" id="CLU_058591_0_2_6"/>
<dbReference type="OrthoDB" id="9806396at2"/>
<dbReference type="BioCyc" id="SGLO343509:SGP1_RS20810-MONOMER"/>
<dbReference type="Proteomes" id="UP000001932">
    <property type="component" value="Chromosome"/>
</dbReference>
<dbReference type="GO" id="GO:0022627">
    <property type="term" value="C:cytosolic small ribosomal subunit"/>
    <property type="evidence" value="ECO:0007669"/>
    <property type="project" value="TreeGrafter"/>
</dbReference>
<dbReference type="GO" id="GO:0003729">
    <property type="term" value="F:mRNA binding"/>
    <property type="evidence" value="ECO:0007669"/>
    <property type="project" value="UniProtKB-UniRule"/>
</dbReference>
<dbReference type="GO" id="GO:0019843">
    <property type="term" value="F:rRNA binding"/>
    <property type="evidence" value="ECO:0007669"/>
    <property type="project" value="UniProtKB-UniRule"/>
</dbReference>
<dbReference type="GO" id="GO:0003735">
    <property type="term" value="F:structural constituent of ribosome"/>
    <property type="evidence" value="ECO:0007669"/>
    <property type="project" value="InterPro"/>
</dbReference>
<dbReference type="GO" id="GO:0006412">
    <property type="term" value="P:translation"/>
    <property type="evidence" value="ECO:0007669"/>
    <property type="project" value="UniProtKB-UniRule"/>
</dbReference>
<dbReference type="CDD" id="cd02412">
    <property type="entry name" value="KH-II_30S_S3"/>
    <property type="match status" value="1"/>
</dbReference>
<dbReference type="FunFam" id="3.30.1140.32:FF:000001">
    <property type="entry name" value="30S ribosomal protein S3"/>
    <property type="match status" value="1"/>
</dbReference>
<dbReference type="FunFam" id="3.30.300.20:FF:000001">
    <property type="entry name" value="30S ribosomal protein S3"/>
    <property type="match status" value="1"/>
</dbReference>
<dbReference type="Gene3D" id="3.30.300.20">
    <property type="match status" value="1"/>
</dbReference>
<dbReference type="Gene3D" id="3.30.1140.32">
    <property type="entry name" value="Ribosomal protein S3, C-terminal domain"/>
    <property type="match status" value="1"/>
</dbReference>
<dbReference type="HAMAP" id="MF_01309_B">
    <property type="entry name" value="Ribosomal_uS3_B"/>
    <property type="match status" value="1"/>
</dbReference>
<dbReference type="InterPro" id="IPR004087">
    <property type="entry name" value="KH_dom"/>
</dbReference>
<dbReference type="InterPro" id="IPR015946">
    <property type="entry name" value="KH_dom-like_a/b"/>
</dbReference>
<dbReference type="InterPro" id="IPR004044">
    <property type="entry name" value="KH_dom_type_2"/>
</dbReference>
<dbReference type="InterPro" id="IPR009019">
    <property type="entry name" value="KH_sf_prok-type"/>
</dbReference>
<dbReference type="InterPro" id="IPR036419">
    <property type="entry name" value="Ribosomal_S3_C_sf"/>
</dbReference>
<dbReference type="InterPro" id="IPR005704">
    <property type="entry name" value="Ribosomal_uS3_bac-typ"/>
</dbReference>
<dbReference type="InterPro" id="IPR001351">
    <property type="entry name" value="Ribosomal_uS3_C"/>
</dbReference>
<dbReference type="InterPro" id="IPR018280">
    <property type="entry name" value="Ribosomal_uS3_CS"/>
</dbReference>
<dbReference type="NCBIfam" id="TIGR01009">
    <property type="entry name" value="rpsC_bact"/>
    <property type="match status" value="1"/>
</dbReference>
<dbReference type="PANTHER" id="PTHR11760">
    <property type="entry name" value="30S/40S RIBOSOMAL PROTEIN S3"/>
    <property type="match status" value="1"/>
</dbReference>
<dbReference type="PANTHER" id="PTHR11760:SF19">
    <property type="entry name" value="SMALL RIBOSOMAL SUBUNIT PROTEIN US3C"/>
    <property type="match status" value="1"/>
</dbReference>
<dbReference type="Pfam" id="PF07650">
    <property type="entry name" value="KH_2"/>
    <property type="match status" value="1"/>
</dbReference>
<dbReference type="Pfam" id="PF00189">
    <property type="entry name" value="Ribosomal_S3_C"/>
    <property type="match status" value="1"/>
</dbReference>
<dbReference type="SMART" id="SM00322">
    <property type="entry name" value="KH"/>
    <property type="match status" value="1"/>
</dbReference>
<dbReference type="SUPFAM" id="SSF54814">
    <property type="entry name" value="Prokaryotic type KH domain (KH-domain type II)"/>
    <property type="match status" value="1"/>
</dbReference>
<dbReference type="SUPFAM" id="SSF54821">
    <property type="entry name" value="Ribosomal protein S3 C-terminal domain"/>
    <property type="match status" value="1"/>
</dbReference>
<dbReference type="PROSITE" id="PS50823">
    <property type="entry name" value="KH_TYPE_2"/>
    <property type="match status" value="1"/>
</dbReference>
<dbReference type="PROSITE" id="PS00548">
    <property type="entry name" value="RIBOSOMAL_S3"/>
    <property type="match status" value="1"/>
</dbReference>
<accession>Q2NQM8</accession>
<organism>
    <name type="scientific">Sodalis glossinidius (strain morsitans)</name>
    <dbReference type="NCBI Taxonomy" id="343509"/>
    <lineage>
        <taxon>Bacteria</taxon>
        <taxon>Pseudomonadati</taxon>
        <taxon>Pseudomonadota</taxon>
        <taxon>Gammaproteobacteria</taxon>
        <taxon>Enterobacterales</taxon>
        <taxon>Bruguierivoracaceae</taxon>
        <taxon>Sodalis</taxon>
    </lineage>
</organism>
<gene>
    <name evidence="1" type="primary">rpsC</name>
    <name type="ordered locus">SG2272</name>
</gene>
<sequence length="232" mass="25857">MGQKVHPNGIRLGIVKPWNSTWYANTKEFADNLDSDFKVRQFLTKELSKASVSRLVIERPAKSIRVTIHTARPGIVIGKKGEDVEKLRKVVADIAGVPAQINIAEVRKPELDAKLVADSISSQLERRVMFRRAMKRAVQNAMRLGAKGIKVEVSGRLGGAEIARTEWYREGRVPLHTLRADIDYNTSEAHTTYGVIGVKVWIFKGEILGGMAAVEQPEPAAQPKKQQRKGRK</sequence>
<proteinExistence type="inferred from homology"/>
<name>RS3_SODGM</name>
<protein>
    <recommendedName>
        <fullName evidence="1">Small ribosomal subunit protein uS3</fullName>
    </recommendedName>
    <alternativeName>
        <fullName evidence="2">30S ribosomal protein S3</fullName>
    </alternativeName>
</protein>
<reference key="1">
    <citation type="journal article" date="2006" name="Genome Res.">
        <title>Massive genome erosion and functional adaptations provide insights into the symbiotic lifestyle of Sodalis glossinidius in the tsetse host.</title>
        <authorList>
            <person name="Toh H."/>
            <person name="Weiss B.L."/>
            <person name="Perkin S.A.H."/>
            <person name="Yamashita A."/>
            <person name="Oshima K."/>
            <person name="Hattori M."/>
            <person name="Aksoy S."/>
        </authorList>
    </citation>
    <scope>NUCLEOTIDE SEQUENCE [LARGE SCALE GENOMIC DNA]</scope>
    <source>
        <strain>morsitans</strain>
    </source>
</reference>
<feature type="chain" id="PRO_0000293888" description="Small ribosomal subunit protein uS3">
    <location>
        <begin position="1"/>
        <end position="232"/>
    </location>
</feature>
<feature type="domain" description="KH type-2" evidence="1">
    <location>
        <begin position="39"/>
        <end position="107"/>
    </location>
</feature>